<protein>
    <recommendedName>
        <fullName evidence="1">Large ribosomal subunit protein bL12c</fullName>
    </recommendedName>
    <alternativeName>
        <fullName evidence="2">50S ribosomal protein L12, chloroplastic</fullName>
    </alternativeName>
</protein>
<comment type="function">
    <text evidence="1">Forms part of the ribosomal stalk which helps the ribosome interact with GTP-bound translation factors. Is thus essential for accurate translation.</text>
</comment>
<comment type="subunit">
    <text evidence="1">Homodimer. Part of the ribosomal stalk of the 50S ribosomal subunit. Forms a multimeric L10(L12)X complex, where L10 forms an elongated spine to which 2 to 4 L12 dimers bind in a sequential fashion. Binds GTP-bound translation factors.</text>
</comment>
<comment type="subcellular location">
    <subcellularLocation>
        <location>Plastid</location>
        <location>Chloroplast</location>
    </subcellularLocation>
</comment>
<comment type="similarity">
    <text evidence="1">Belongs to the bacterial ribosomal protein bL12 family.</text>
</comment>
<keyword id="KW-0150">Chloroplast</keyword>
<keyword id="KW-0934">Plastid</keyword>
<keyword id="KW-1185">Reference proteome</keyword>
<keyword id="KW-0687">Ribonucleoprotein</keyword>
<keyword id="KW-0689">Ribosomal protein</keyword>
<feature type="chain" id="PRO_0000276331" description="Large ribosomal subunit protein bL12c">
    <location>
        <begin position="1"/>
        <end position="128"/>
    </location>
</feature>
<dbReference type="EMBL" id="EF067920">
    <property type="protein sequence ID" value="ABK20618.1"/>
    <property type="molecule type" value="Genomic_DNA"/>
</dbReference>
<dbReference type="RefSeq" id="YP_874395.1">
    <property type="nucleotide sequence ID" value="NC_008588.1"/>
</dbReference>
<dbReference type="SMR" id="A0T0C0"/>
<dbReference type="FunCoup" id="A0T0C0">
    <property type="interactions" value="135"/>
</dbReference>
<dbReference type="STRING" id="556484.A0T0C0"/>
<dbReference type="GeneID" id="4524710"/>
<dbReference type="InParanoid" id="A0T0C0"/>
<dbReference type="Proteomes" id="UP000000759">
    <property type="component" value="Chloroplast"/>
</dbReference>
<dbReference type="GO" id="GO:0009507">
    <property type="term" value="C:chloroplast"/>
    <property type="evidence" value="ECO:0007669"/>
    <property type="project" value="UniProtKB-SubCell"/>
</dbReference>
<dbReference type="GO" id="GO:0022625">
    <property type="term" value="C:cytosolic large ribosomal subunit"/>
    <property type="evidence" value="ECO:0007669"/>
    <property type="project" value="TreeGrafter"/>
</dbReference>
<dbReference type="GO" id="GO:0003729">
    <property type="term" value="F:mRNA binding"/>
    <property type="evidence" value="ECO:0007669"/>
    <property type="project" value="TreeGrafter"/>
</dbReference>
<dbReference type="GO" id="GO:0003735">
    <property type="term" value="F:structural constituent of ribosome"/>
    <property type="evidence" value="ECO:0007669"/>
    <property type="project" value="InterPro"/>
</dbReference>
<dbReference type="GO" id="GO:0006412">
    <property type="term" value="P:translation"/>
    <property type="evidence" value="ECO:0007669"/>
    <property type="project" value="UniProtKB-UniRule"/>
</dbReference>
<dbReference type="CDD" id="cd00387">
    <property type="entry name" value="Ribosomal_L7_L12"/>
    <property type="match status" value="1"/>
</dbReference>
<dbReference type="FunFam" id="3.30.1390.10:FF:000001">
    <property type="entry name" value="50S ribosomal protein L7/L12"/>
    <property type="match status" value="1"/>
</dbReference>
<dbReference type="Gene3D" id="3.30.1390.10">
    <property type="match status" value="1"/>
</dbReference>
<dbReference type="Gene3D" id="1.20.5.710">
    <property type="entry name" value="Single helix bin"/>
    <property type="match status" value="1"/>
</dbReference>
<dbReference type="HAMAP" id="MF_00368">
    <property type="entry name" value="Ribosomal_bL12"/>
    <property type="match status" value="1"/>
</dbReference>
<dbReference type="InterPro" id="IPR000206">
    <property type="entry name" value="Ribosomal_bL12"/>
</dbReference>
<dbReference type="InterPro" id="IPR013823">
    <property type="entry name" value="Ribosomal_bL12_C"/>
</dbReference>
<dbReference type="InterPro" id="IPR014719">
    <property type="entry name" value="Ribosomal_bL12_C/ClpS-like"/>
</dbReference>
<dbReference type="InterPro" id="IPR008932">
    <property type="entry name" value="Ribosomal_bL12_oligo"/>
</dbReference>
<dbReference type="InterPro" id="IPR036235">
    <property type="entry name" value="Ribosomal_bL12_oligo_N_sf"/>
</dbReference>
<dbReference type="NCBIfam" id="TIGR00855">
    <property type="entry name" value="L12"/>
    <property type="match status" value="1"/>
</dbReference>
<dbReference type="PANTHER" id="PTHR45987">
    <property type="entry name" value="39S RIBOSOMAL PROTEIN L12"/>
    <property type="match status" value="1"/>
</dbReference>
<dbReference type="PANTHER" id="PTHR45987:SF4">
    <property type="entry name" value="LARGE RIBOSOMAL SUBUNIT PROTEIN BL12M"/>
    <property type="match status" value="1"/>
</dbReference>
<dbReference type="Pfam" id="PF00542">
    <property type="entry name" value="Ribosomal_L12"/>
    <property type="match status" value="1"/>
</dbReference>
<dbReference type="Pfam" id="PF16320">
    <property type="entry name" value="Ribosomal_L12_N"/>
    <property type="match status" value="1"/>
</dbReference>
<dbReference type="SUPFAM" id="SSF54736">
    <property type="entry name" value="ClpS-like"/>
    <property type="match status" value="1"/>
</dbReference>
<dbReference type="SUPFAM" id="SSF48300">
    <property type="entry name" value="Ribosomal protein L7/12, oligomerisation (N-terminal) domain"/>
    <property type="match status" value="1"/>
</dbReference>
<sequence>MSEKIDQIVEDLKTLTLLEASELVTKIEETFGVDASAAASGGVVMAAAPAVVEEVEEKTEFNLMLDEVPADKKIAVLKVVRSLTGLGLKEAKELVESAPKQIQEGLGKDAAEEAKKQIEAAGGKASLT</sequence>
<evidence type="ECO:0000255" key="1">
    <source>
        <dbReference type="HAMAP-Rule" id="MF_00368"/>
    </source>
</evidence>
<evidence type="ECO:0000305" key="2"/>
<accession>A0T0C0</accession>
<gene>
    <name evidence="1" type="primary">rpl12</name>
</gene>
<organism>
    <name type="scientific">Phaeodactylum tricornutum (strain CCAP 1055/1)</name>
    <dbReference type="NCBI Taxonomy" id="556484"/>
    <lineage>
        <taxon>Eukaryota</taxon>
        <taxon>Sar</taxon>
        <taxon>Stramenopiles</taxon>
        <taxon>Ochrophyta</taxon>
        <taxon>Bacillariophyta</taxon>
        <taxon>Bacillariophyceae</taxon>
        <taxon>Bacillariophycidae</taxon>
        <taxon>Naviculales</taxon>
        <taxon>Phaeodactylaceae</taxon>
        <taxon>Phaeodactylum</taxon>
    </lineage>
</organism>
<proteinExistence type="inferred from homology"/>
<geneLocation type="chloroplast"/>
<reference key="1">
    <citation type="journal article" date="2007" name="Mol. Genet. Genomics">
        <title>Chloroplast genomes of the diatoms Phaeodactylum tricornutum and Thalassiosira pseudonana: comparison with other plastid genomes of the red lineage.</title>
        <authorList>
            <person name="Oudot-Le Secq M.-P."/>
            <person name="Grimwood J."/>
            <person name="Shapiro H."/>
            <person name="Armbrust E.V."/>
            <person name="Bowler C."/>
            <person name="Green B.R."/>
        </authorList>
    </citation>
    <scope>NUCLEOTIDE SEQUENCE [LARGE SCALE GENOMIC DNA]</scope>
    <source>
        <strain>CCAP 1055/1</strain>
    </source>
</reference>
<name>RK12_PHATC</name>